<organism>
    <name type="scientific">Methanococcus aeolicus (strain ATCC BAA-1280 / DSM 17508 / OCM 812 / Nankai-3)</name>
    <dbReference type="NCBI Taxonomy" id="419665"/>
    <lineage>
        <taxon>Archaea</taxon>
        <taxon>Methanobacteriati</taxon>
        <taxon>Methanobacteriota</taxon>
        <taxon>Methanomada group</taxon>
        <taxon>Methanococci</taxon>
        <taxon>Methanococcales</taxon>
        <taxon>Methanococcaceae</taxon>
        <taxon>Methanococcus</taxon>
    </lineage>
</organism>
<evidence type="ECO:0000255" key="1">
    <source>
        <dbReference type="HAMAP-Rule" id="MF_00098"/>
    </source>
</evidence>
<keyword id="KW-0030">Aminoacyl-tRNA synthetase</keyword>
<keyword id="KW-0067">ATP-binding</keyword>
<keyword id="KW-0963">Cytoplasm</keyword>
<keyword id="KW-0436">Ligase</keyword>
<keyword id="KW-0479">Metal-binding</keyword>
<keyword id="KW-0547">Nucleotide-binding</keyword>
<keyword id="KW-0648">Protein biosynthesis</keyword>
<keyword id="KW-0694">RNA-binding</keyword>
<keyword id="KW-0820">tRNA-binding</keyword>
<keyword id="KW-0862">Zinc</keyword>
<reference key="1">
    <citation type="submission" date="2007-06" db="EMBL/GenBank/DDBJ databases">
        <title>Complete sequence of Methanococcus aeolicus Nankai-3.</title>
        <authorList>
            <consortium name="US DOE Joint Genome Institute"/>
            <person name="Copeland A."/>
            <person name="Lucas S."/>
            <person name="Lapidus A."/>
            <person name="Barry K."/>
            <person name="Glavina del Rio T."/>
            <person name="Dalin E."/>
            <person name="Tice H."/>
            <person name="Pitluck S."/>
            <person name="Chain P."/>
            <person name="Malfatti S."/>
            <person name="Shin M."/>
            <person name="Vergez L."/>
            <person name="Schmutz J."/>
            <person name="Larimer F."/>
            <person name="Land M."/>
            <person name="Hauser L."/>
            <person name="Kyrpides N."/>
            <person name="Lykidis A."/>
            <person name="Sieprawska-Lupa M."/>
            <person name="Whitman W.B."/>
            <person name="Richardson P."/>
        </authorList>
    </citation>
    <scope>NUCLEOTIDE SEQUENCE [LARGE SCALE GENOMIC DNA]</scope>
    <source>
        <strain>ATCC BAA-1280 / DSM 17508 / OCM 812 / Nankai-3</strain>
    </source>
</reference>
<accession>A6UUN1</accession>
<name>SYM_META3</name>
<dbReference type="EC" id="6.1.1.10" evidence="1"/>
<dbReference type="EMBL" id="CP000743">
    <property type="protein sequence ID" value="ABR56203.1"/>
    <property type="molecule type" value="Genomic_DNA"/>
</dbReference>
<dbReference type="RefSeq" id="WP_011973335.1">
    <property type="nucleotide sequence ID" value="NC_009635.1"/>
</dbReference>
<dbReference type="SMR" id="A6UUN1"/>
<dbReference type="STRING" id="419665.Maeo_0619"/>
<dbReference type="GeneID" id="5326396"/>
<dbReference type="KEGG" id="mae:Maeo_0619"/>
<dbReference type="eggNOG" id="arCOG00810">
    <property type="taxonomic scope" value="Archaea"/>
</dbReference>
<dbReference type="HOGENOM" id="CLU_009710_1_2_2"/>
<dbReference type="OrthoDB" id="371856at2157"/>
<dbReference type="Proteomes" id="UP000001106">
    <property type="component" value="Chromosome"/>
</dbReference>
<dbReference type="GO" id="GO:0017101">
    <property type="term" value="C:aminoacyl-tRNA synthetase multienzyme complex"/>
    <property type="evidence" value="ECO:0007669"/>
    <property type="project" value="TreeGrafter"/>
</dbReference>
<dbReference type="GO" id="GO:0005829">
    <property type="term" value="C:cytosol"/>
    <property type="evidence" value="ECO:0007669"/>
    <property type="project" value="TreeGrafter"/>
</dbReference>
<dbReference type="GO" id="GO:0005524">
    <property type="term" value="F:ATP binding"/>
    <property type="evidence" value="ECO:0007669"/>
    <property type="project" value="UniProtKB-UniRule"/>
</dbReference>
<dbReference type="GO" id="GO:0046872">
    <property type="term" value="F:metal ion binding"/>
    <property type="evidence" value="ECO:0007669"/>
    <property type="project" value="UniProtKB-KW"/>
</dbReference>
<dbReference type="GO" id="GO:0004825">
    <property type="term" value="F:methionine-tRNA ligase activity"/>
    <property type="evidence" value="ECO:0007669"/>
    <property type="project" value="UniProtKB-UniRule"/>
</dbReference>
<dbReference type="GO" id="GO:0000049">
    <property type="term" value="F:tRNA binding"/>
    <property type="evidence" value="ECO:0007669"/>
    <property type="project" value="UniProtKB-KW"/>
</dbReference>
<dbReference type="GO" id="GO:0006431">
    <property type="term" value="P:methionyl-tRNA aminoacylation"/>
    <property type="evidence" value="ECO:0007669"/>
    <property type="project" value="UniProtKB-UniRule"/>
</dbReference>
<dbReference type="CDD" id="cd07957">
    <property type="entry name" value="Anticodon_Ia_Met"/>
    <property type="match status" value="1"/>
</dbReference>
<dbReference type="CDD" id="cd00814">
    <property type="entry name" value="MetRS_core"/>
    <property type="match status" value="1"/>
</dbReference>
<dbReference type="CDD" id="cd02800">
    <property type="entry name" value="tRNA_bind_EcMetRS_like"/>
    <property type="match status" value="1"/>
</dbReference>
<dbReference type="FunFam" id="2.20.28.20:FF:000001">
    <property type="entry name" value="Methionine--tRNA ligase"/>
    <property type="match status" value="1"/>
</dbReference>
<dbReference type="FunFam" id="2.40.50.140:FF:000042">
    <property type="entry name" value="Methionine--tRNA ligase"/>
    <property type="match status" value="1"/>
</dbReference>
<dbReference type="Gene3D" id="3.40.50.620">
    <property type="entry name" value="HUPs"/>
    <property type="match status" value="1"/>
</dbReference>
<dbReference type="Gene3D" id="1.10.730.10">
    <property type="entry name" value="Isoleucyl-tRNA Synthetase, Domain 1"/>
    <property type="match status" value="1"/>
</dbReference>
<dbReference type="Gene3D" id="2.20.28.20">
    <property type="entry name" value="Methionyl-tRNA synthetase, Zn-domain"/>
    <property type="match status" value="1"/>
</dbReference>
<dbReference type="Gene3D" id="2.40.50.140">
    <property type="entry name" value="Nucleic acid-binding proteins"/>
    <property type="match status" value="1"/>
</dbReference>
<dbReference type="HAMAP" id="MF_00098">
    <property type="entry name" value="Met_tRNA_synth_type1"/>
    <property type="match status" value="1"/>
</dbReference>
<dbReference type="InterPro" id="IPR041872">
    <property type="entry name" value="Anticodon_Met"/>
</dbReference>
<dbReference type="InterPro" id="IPR004495">
    <property type="entry name" value="Met-tRNA-synth_bsu_C"/>
</dbReference>
<dbReference type="InterPro" id="IPR023458">
    <property type="entry name" value="Met-tRNA_ligase_1"/>
</dbReference>
<dbReference type="InterPro" id="IPR014758">
    <property type="entry name" value="Met-tRNA_synth"/>
</dbReference>
<dbReference type="InterPro" id="IPR015413">
    <property type="entry name" value="Methionyl/Leucyl_tRNA_Synth"/>
</dbReference>
<dbReference type="InterPro" id="IPR033911">
    <property type="entry name" value="MetRS_core"/>
</dbReference>
<dbReference type="InterPro" id="IPR029038">
    <property type="entry name" value="MetRS_Zn"/>
</dbReference>
<dbReference type="InterPro" id="IPR012340">
    <property type="entry name" value="NA-bd_OB-fold"/>
</dbReference>
<dbReference type="InterPro" id="IPR014729">
    <property type="entry name" value="Rossmann-like_a/b/a_fold"/>
</dbReference>
<dbReference type="InterPro" id="IPR002547">
    <property type="entry name" value="tRNA-bd_dom"/>
</dbReference>
<dbReference type="InterPro" id="IPR009080">
    <property type="entry name" value="tRNAsynth_Ia_anticodon-bd"/>
</dbReference>
<dbReference type="NCBIfam" id="TIGR00398">
    <property type="entry name" value="metG"/>
    <property type="match status" value="1"/>
</dbReference>
<dbReference type="NCBIfam" id="TIGR00399">
    <property type="entry name" value="metG_C_term"/>
    <property type="match status" value="1"/>
</dbReference>
<dbReference type="NCBIfam" id="NF001100">
    <property type="entry name" value="PRK00133.1"/>
    <property type="match status" value="1"/>
</dbReference>
<dbReference type="PANTHER" id="PTHR45765">
    <property type="entry name" value="METHIONINE--TRNA LIGASE"/>
    <property type="match status" value="1"/>
</dbReference>
<dbReference type="PANTHER" id="PTHR45765:SF1">
    <property type="entry name" value="METHIONINE--TRNA LIGASE, CYTOPLASMIC"/>
    <property type="match status" value="1"/>
</dbReference>
<dbReference type="Pfam" id="PF19303">
    <property type="entry name" value="Anticodon_3"/>
    <property type="match status" value="1"/>
</dbReference>
<dbReference type="Pfam" id="PF09334">
    <property type="entry name" value="tRNA-synt_1g"/>
    <property type="match status" value="1"/>
</dbReference>
<dbReference type="Pfam" id="PF01588">
    <property type="entry name" value="tRNA_bind"/>
    <property type="match status" value="1"/>
</dbReference>
<dbReference type="PRINTS" id="PR01041">
    <property type="entry name" value="TRNASYNTHMET"/>
</dbReference>
<dbReference type="SUPFAM" id="SSF47323">
    <property type="entry name" value="Anticodon-binding domain of a subclass of class I aminoacyl-tRNA synthetases"/>
    <property type="match status" value="1"/>
</dbReference>
<dbReference type="SUPFAM" id="SSF57770">
    <property type="entry name" value="Methionyl-tRNA synthetase (MetRS), Zn-domain"/>
    <property type="match status" value="1"/>
</dbReference>
<dbReference type="SUPFAM" id="SSF50249">
    <property type="entry name" value="Nucleic acid-binding proteins"/>
    <property type="match status" value="1"/>
</dbReference>
<dbReference type="SUPFAM" id="SSF52374">
    <property type="entry name" value="Nucleotidylyl transferase"/>
    <property type="match status" value="1"/>
</dbReference>
<dbReference type="PROSITE" id="PS50886">
    <property type="entry name" value="TRBD"/>
    <property type="match status" value="1"/>
</dbReference>
<proteinExistence type="inferred from homology"/>
<protein>
    <recommendedName>
        <fullName evidence="1">Methionine--tRNA ligase</fullName>
        <ecNumber evidence="1">6.1.1.10</ecNumber>
    </recommendedName>
    <alternativeName>
        <fullName evidence="1">Methionyl-tRNA synthetase</fullName>
        <shortName evidence="1">MetRS</shortName>
    </alternativeName>
</protein>
<feature type="chain" id="PRO_0000331941" description="Methionine--tRNA ligase">
    <location>
        <begin position="1"/>
        <end position="672"/>
    </location>
</feature>
<feature type="domain" description="tRNA-binding" evidence="1">
    <location>
        <begin position="573"/>
        <end position="672"/>
    </location>
</feature>
<feature type="short sequence motif" description="'HIGH' region">
    <location>
        <begin position="12"/>
        <end position="22"/>
    </location>
</feature>
<feature type="short sequence motif" description="'KMSKS' region">
    <location>
        <begin position="330"/>
        <end position="334"/>
    </location>
</feature>
<feature type="binding site" evidence="1">
    <location>
        <position position="144"/>
    </location>
    <ligand>
        <name>Zn(2+)</name>
        <dbReference type="ChEBI" id="CHEBI:29105"/>
    </ligand>
</feature>
<feature type="binding site" evidence="1">
    <location>
        <position position="147"/>
    </location>
    <ligand>
        <name>Zn(2+)</name>
        <dbReference type="ChEBI" id="CHEBI:29105"/>
    </ligand>
</feature>
<feature type="binding site" evidence="1">
    <location>
        <position position="156"/>
    </location>
    <ligand>
        <name>Zn(2+)</name>
        <dbReference type="ChEBI" id="CHEBI:29105"/>
    </ligand>
</feature>
<feature type="binding site" evidence="1">
    <location>
        <position position="159"/>
    </location>
    <ligand>
        <name>Zn(2+)</name>
        <dbReference type="ChEBI" id="CHEBI:29105"/>
    </ligand>
</feature>
<feature type="binding site" evidence="1">
    <location>
        <position position="333"/>
    </location>
    <ligand>
        <name>ATP</name>
        <dbReference type="ChEBI" id="CHEBI:30616"/>
    </ligand>
</feature>
<sequence>MNNKYLLTTALAYTNGPLHLGHARSTYIPADIIKRYLKLKGNDVIHVGGTDNHGVPITLTAEKEGVKPEDIVNKYHNEIKRDLDNLSVEFDSYGKTHSDTHIQNAQEFYKKLKENGYIYEKEIEQFYCPDCDKFLADRYVEGSCPFCEGEARGDHCEVCGRHLEPTELVNPYCVICNATPQLKKTTHYFFKLSALSDNLDNYVKNSNMPDHIKNMAYSWIRELHDWDISRGIKWGVPIPDDENQVMYVWLEAPIGYISFTKMMGDIWKEYWLKNNDNNTENQNTKIWHFIGKDITVHHAVFWPGMLLGHGEYNLPNSIFSGGYLTLEGKKMSTSKKWVVWVDDFIKYFDSDYLRYFLMANAPLNRDCDFSFDEFQKRINTELIAIIANFTHRALVFSHRKFGALPVIDKPEEELNKEDLALLDKCSETIEKYNKNMMDCNLKDALVDIIHLAKEGNNYFQKMEPWTVDDENRLKQIMFVCGVITKHIAYLLYPFMPNKTNELLDLMNEEMDLEIRGNELKKPIVVFSKIENDTIKMVKEKLLKSENSKNTKNKKKNTKKNKNGEKMELIGIDDFAKIELKVAQILEAEEVPKSKKLLKLIVDIGDEKRQVVAGIKGHYTPEELIGKKIVLVCNLKPAKLCGVESQGMVLAAGDEEVALLSPEKDLPVGSTIC</sequence>
<comment type="function">
    <text evidence="1">Is required not only for elongation of protein synthesis but also for the initiation of all mRNA translation through initiator tRNA(fMet) aminoacylation.</text>
</comment>
<comment type="catalytic activity">
    <reaction evidence="1">
        <text>tRNA(Met) + L-methionine + ATP = L-methionyl-tRNA(Met) + AMP + diphosphate</text>
        <dbReference type="Rhea" id="RHEA:13481"/>
        <dbReference type="Rhea" id="RHEA-COMP:9667"/>
        <dbReference type="Rhea" id="RHEA-COMP:9698"/>
        <dbReference type="ChEBI" id="CHEBI:30616"/>
        <dbReference type="ChEBI" id="CHEBI:33019"/>
        <dbReference type="ChEBI" id="CHEBI:57844"/>
        <dbReference type="ChEBI" id="CHEBI:78442"/>
        <dbReference type="ChEBI" id="CHEBI:78530"/>
        <dbReference type="ChEBI" id="CHEBI:456215"/>
        <dbReference type="EC" id="6.1.1.10"/>
    </reaction>
</comment>
<comment type="cofactor">
    <cofactor evidence="1">
        <name>Zn(2+)</name>
        <dbReference type="ChEBI" id="CHEBI:29105"/>
    </cofactor>
    <text evidence="1">Binds 1 zinc ion per subunit.</text>
</comment>
<comment type="subunit">
    <text evidence="1">Homodimer.</text>
</comment>
<comment type="subcellular location">
    <subcellularLocation>
        <location evidence="1">Cytoplasm</location>
    </subcellularLocation>
</comment>
<comment type="similarity">
    <text evidence="1">Belongs to the class-I aminoacyl-tRNA synthetase family. MetG type 1 subfamily.</text>
</comment>
<gene>
    <name evidence="1" type="primary">metG</name>
    <name type="ordered locus">Maeo_0619</name>
</gene>